<accession>Q46JH4</accession>
<gene>
    <name evidence="1" type="primary">trpC</name>
    <name type="ordered locus">PMN2A_0863</name>
</gene>
<feature type="chain" id="PRO_1000018528" description="Indole-3-glycerol phosphate synthase">
    <location>
        <begin position="1"/>
        <end position="295"/>
    </location>
</feature>
<comment type="catalytic activity">
    <reaction evidence="1">
        <text>1-(2-carboxyphenylamino)-1-deoxy-D-ribulose 5-phosphate + H(+) = (1S,2R)-1-C-(indol-3-yl)glycerol 3-phosphate + CO2 + H2O</text>
        <dbReference type="Rhea" id="RHEA:23476"/>
        <dbReference type="ChEBI" id="CHEBI:15377"/>
        <dbReference type="ChEBI" id="CHEBI:15378"/>
        <dbReference type="ChEBI" id="CHEBI:16526"/>
        <dbReference type="ChEBI" id="CHEBI:58613"/>
        <dbReference type="ChEBI" id="CHEBI:58866"/>
        <dbReference type="EC" id="4.1.1.48"/>
    </reaction>
</comment>
<comment type="pathway">
    <text evidence="1">Amino-acid biosynthesis; L-tryptophan biosynthesis; L-tryptophan from chorismate: step 4/5.</text>
</comment>
<comment type="similarity">
    <text evidence="1">Belongs to the TrpC family.</text>
</comment>
<evidence type="ECO:0000255" key="1">
    <source>
        <dbReference type="HAMAP-Rule" id="MF_00134"/>
    </source>
</evidence>
<name>TRPC_PROMT</name>
<proteinExistence type="inferred from homology"/>
<reference key="1">
    <citation type="journal article" date="2007" name="PLoS Genet.">
        <title>Patterns and implications of gene gain and loss in the evolution of Prochlorococcus.</title>
        <authorList>
            <person name="Kettler G.C."/>
            <person name="Martiny A.C."/>
            <person name="Huang K."/>
            <person name="Zucker J."/>
            <person name="Coleman M.L."/>
            <person name="Rodrigue S."/>
            <person name="Chen F."/>
            <person name="Lapidus A."/>
            <person name="Ferriera S."/>
            <person name="Johnson J."/>
            <person name="Steglich C."/>
            <person name="Church G.M."/>
            <person name="Richardson P."/>
            <person name="Chisholm S.W."/>
        </authorList>
    </citation>
    <scope>NUCLEOTIDE SEQUENCE [LARGE SCALE GENOMIC DNA]</scope>
    <source>
        <strain>NATL2A</strain>
    </source>
</reference>
<protein>
    <recommendedName>
        <fullName evidence="1">Indole-3-glycerol phosphate synthase</fullName>
        <shortName evidence="1">IGPS</shortName>
        <ecNumber evidence="1">4.1.1.48</ecNumber>
    </recommendedName>
</protein>
<dbReference type="EC" id="4.1.1.48" evidence="1"/>
<dbReference type="EMBL" id="CP000095">
    <property type="protein sequence ID" value="AAZ58354.1"/>
    <property type="molecule type" value="Genomic_DNA"/>
</dbReference>
<dbReference type="RefSeq" id="WP_011294951.1">
    <property type="nucleotide sequence ID" value="NC_007335.2"/>
</dbReference>
<dbReference type="SMR" id="Q46JH4"/>
<dbReference type="STRING" id="59920.PMN2A_0863"/>
<dbReference type="KEGG" id="pmn:PMN2A_0863"/>
<dbReference type="HOGENOM" id="CLU_034247_2_0_3"/>
<dbReference type="OrthoDB" id="9804217at2"/>
<dbReference type="PhylomeDB" id="Q46JH4"/>
<dbReference type="UniPathway" id="UPA00035">
    <property type="reaction ID" value="UER00043"/>
</dbReference>
<dbReference type="Proteomes" id="UP000002535">
    <property type="component" value="Chromosome"/>
</dbReference>
<dbReference type="GO" id="GO:0004425">
    <property type="term" value="F:indole-3-glycerol-phosphate synthase activity"/>
    <property type="evidence" value="ECO:0007669"/>
    <property type="project" value="UniProtKB-UniRule"/>
</dbReference>
<dbReference type="GO" id="GO:0004640">
    <property type="term" value="F:phosphoribosylanthranilate isomerase activity"/>
    <property type="evidence" value="ECO:0007669"/>
    <property type="project" value="TreeGrafter"/>
</dbReference>
<dbReference type="GO" id="GO:0000162">
    <property type="term" value="P:L-tryptophan biosynthetic process"/>
    <property type="evidence" value="ECO:0007669"/>
    <property type="project" value="UniProtKB-UniRule"/>
</dbReference>
<dbReference type="CDD" id="cd00331">
    <property type="entry name" value="IGPS"/>
    <property type="match status" value="1"/>
</dbReference>
<dbReference type="FunFam" id="3.20.20.70:FF:000024">
    <property type="entry name" value="Indole-3-glycerol phosphate synthase"/>
    <property type="match status" value="1"/>
</dbReference>
<dbReference type="Gene3D" id="3.20.20.70">
    <property type="entry name" value="Aldolase class I"/>
    <property type="match status" value="1"/>
</dbReference>
<dbReference type="HAMAP" id="MF_00134_B">
    <property type="entry name" value="IGPS_B"/>
    <property type="match status" value="1"/>
</dbReference>
<dbReference type="InterPro" id="IPR013785">
    <property type="entry name" value="Aldolase_TIM"/>
</dbReference>
<dbReference type="InterPro" id="IPR045186">
    <property type="entry name" value="Indole-3-glycerol_P_synth"/>
</dbReference>
<dbReference type="InterPro" id="IPR013798">
    <property type="entry name" value="Indole-3-glycerol_P_synth_dom"/>
</dbReference>
<dbReference type="InterPro" id="IPR001468">
    <property type="entry name" value="Indole-3-GlycerolPSynthase_CS"/>
</dbReference>
<dbReference type="InterPro" id="IPR011060">
    <property type="entry name" value="RibuloseP-bd_barrel"/>
</dbReference>
<dbReference type="NCBIfam" id="NF001372">
    <property type="entry name" value="PRK00278.1-4"/>
    <property type="match status" value="1"/>
</dbReference>
<dbReference type="NCBIfam" id="NF001377">
    <property type="entry name" value="PRK00278.2-4"/>
    <property type="match status" value="1"/>
</dbReference>
<dbReference type="PANTHER" id="PTHR22854:SF2">
    <property type="entry name" value="INDOLE-3-GLYCEROL-PHOSPHATE SYNTHASE"/>
    <property type="match status" value="1"/>
</dbReference>
<dbReference type="PANTHER" id="PTHR22854">
    <property type="entry name" value="TRYPTOPHAN BIOSYNTHESIS PROTEIN"/>
    <property type="match status" value="1"/>
</dbReference>
<dbReference type="Pfam" id="PF00218">
    <property type="entry name" value="IGPS"/>
    <property type="match status" value="1"/>
</dbReference>
<dbReference type="SUPFAM" id="SSF51366">
    <property type="entry name" value="Ribulose-phoshate binding barrel"/>
    <property type="match status" value="1"/>
</dbReference>
<dbReference type="PROSITE" id="PS00614">
    <property type="entry name" value="IGPS"/>
    <property type="match status" value="1"/>
</dbReference>
<keyword id="KW-0028">Amino-acid biosynthesis</keyword>
<keyword id="KW-0057">Aromatic amino acid biosynthesis</keyword>
<keyword id="KW-0210">Decarboxylase</keyword>
<keyword id="KW-0456">Lyase</keyword>
<keyword id="KW-1185">Reference proteome</keyword>
<keyword id="KW-0822">Tryptophan biosynthesis</keyword>
<organism>
    <name type="scientific">Prochlorococcus marinus (strain NATL2A)</name>
    <dbReference type="NCBI Taxonomy" id="59920"/>
    <lineage>
        <taxon>Bacteria</taxon>
        <taxon>Bacillati</taxon>
        <taxon>Cyanobacteriota</taxon>
        <taxon>Cyanophyceae</taxon>
        <taxon>Synechococcales</taxon>
        <taxon>Prochlorococcaceae</taxon>
        <taxon>Prochlorococcus</taxon>
    </lineage>
</organism>
<sequence>MEIRRRPPNPSIKVANLEYAIPHPDSKPKNILEEIVWEKHLEVEIARKKVSLEDLKKKIKDLPKTKNFIDALRNSNSKPALISEIKKASPSRGIIREDFDAKMIGKMYQEGGANCISVLTDKKFFQGGFDVLVEVRKEIIIPILCKDFILYPYQLYQARAAGADAALLIAAILTDSDLKYLSKVAEHLGLTILVEVHDSEELERVLNINVFNLIGINNRNLKSFKTDLEVTKKLAENYANQIKENSITLVSESGLFNREDLDLVKSYGADAVLVGESLMSQEDILGGVKKLIGNL</sequence>